<reference key="1">
    <citation type="journal article" date="2006" name="Nat. Biotechnol.">
        <title>Complete genome of the mutualistic, N2-fixing grass endophyte Azoarcus sp. strain BH72.</title>
        <authorList>
            <person name="Krause A."/>
            <person name="Ramakumar A."/>
            <person name="Bartels D."/>
            <person name="Battistoni F."/>
            <person name="Bekel T."/>
            <person name="Boch J."/>
            <person name="Boehm M."/>
            <person name="Friedrich F."/>
            <person name="Hurek T."/>
            <person name="Krause L."/>
            <person name="Linke B."/>
            <person name="McHardy A.C."/>
            <person name="Sarkar A."/>
            <person name="Schneiker S."/>
            <person name="Syed A.A."/>
            <person name="Thauer R."/>
            <person name="Vorhoelter F.-J."/>
            <person name="Weidner S."/>
            <person name="Puehler A."/>
            <person name="Reinhold-Hurek B."/>
            <person name="Kaiser O."/>
            <person name="Goesmann A."/>
        </authorList>
    </citation>
    <scope>NUCLEOTIDE SEQUENCE [LARGE SCALE GENOMIC DNA]</scope>
    <source>
        <strain>BH72</strain>
    </source>
</reference>
<name>SYM_AZOSB</name>
<sequence length="723" mass="80120">MSRKILVTNALPYANGDIHLGHLVGYIQGDIWVRFQRMRGNSVHYVCADDTHGTPIMLRAEKEGITPEQLIDRVHGEHLRDFTDFGVGFDHYHSTHSAENRAYAEEIYGKLLGAGFIETRSIEQFYDPVKEMFLPDRFIKGECPKCGAGDQYGDNCEVCGAAYAPTELKNPYSAVSGAKPVLRTSEHYFFRLSDPRAVEFLRDWTRGTNAGGERRLQAEAANKMKEWLGEAGENKLSDWDISRDAPYFGFEIPGAPGKYFYVWLDAPIGYLASFRHYAERRGDIAVADYTDAARAESHGTELVHFIGKDILYFHALFWPAMLKFAGYRTPTQLCVNGFLTVDGAKMSKSRGTFITARSYIVQGLNPEWLRYYFASKSNGTMEDVDLNLDDMIAKVNSDLVGKYVNIASRCAGFIAKRFDGKLGASDPKATADFESAYESAQIAQAYDERDYGRALREIMRLADLANQYVNDHKPWELAKQDGQDAQLHVVCSTALTLFRDLTLYLKPVLPGLAAKVEAFLALPPLQWNDSWKPLPAGHAITAYQHLMTRVERKQIDALLEANRESLAPAAATAPAKDAKPAKEAGSQQRHAEKQQHAAGVSETASPHISIDDFTKVDLRIAKIVDAQHVEGADKLIRLQLDIGETDEAGNPKPRQVFAGIKSAYDPATLVGRLTVMVANLAPRKMKFGMSEGMVLAASDPDGKTGGLYILAPDEGAQAGMRVK</sequence>
<accession>A1KAG3</accession>
<evidence type="ECO:0000255" key="1">
    <source>
        <dbReference type="HAMAP-Rule" id="MF_00098"/>
    </source>
</evidence>
<evidence type="ECO:0000256" key="2">
    <source>
        <dbReference type="SAM" id="MobiDB-lite"/>
    </source>
</evidence>
<feature type="chain" id="PRO_0000331779" description="Methionine--tRNA ligase">
    <location>
        <begin position="1"/>
        <end position="723"/>
    </location>
</feature>
<feature type="domain" description="tRNA-binding" evidence="1">
    <location>
        <begin position="612"/>
        <end position="723"/>
    </location>
</feature>
<feature type="region of interest" description="Disordered" evidence="2">
    <location>
        <begin position="568"/>
        <end position="604"/>
    </location>
</feature>
<feature type="short sequence motif" description="'HIGH' region">
    <location>
        <begin position="12"/>
        <end position="22"/>
    </location>
</feature>
<feature type="short sequence motif" description="'KMSKS' region">
    <location>
        <begin position="345"/>
        <end position="349"/>
    </location>
</feature>
<feature type="binding site" evidence="1">
    <location>
        <position position="143"/>
    </location>
    <ligand>
        <name>Zn(2+)</name>
        <dbReference type="ChEBI" id="CHEBI:29105"/>
    </ligand>
</feature>
<feature type="binding site" evidence="1">
    <location>
        <position position="146"/>
    </location>
    <ligand>
        <name>Zn(2+)</name>
        <dbReference type="ChEBI" id="CHEBI:29105"/>
    </ligand>
</feature>
<feature type="binding site" evidence="1">
    <location>
        <position position="156"/>
    </location>
    <ligand>
        <name>Zn(2+)</name>
        <dbReference type="ChEBI" id="CHEBI:29105"/>
    </ligand>
</feature>
<feature type="binding site" evidence="1">
    <location>
        <position position="159"/>
    </location>
    <ligand>
        <name>Zn(2+)</name>
        <dbReference type="ChEBI" id="CHEBI:29105"/>
    </ligand>
</feature>
<feature type="binding site" evidence="1">
    <location>
        <position position="348"/>
    </location>
    <ligand>
        <name>ATP</name>
        <dbReference type="ChEBI" id="CHEBI:30616"/>
    </ligand>
</feature>
<gene>
    <name evidence="1" type="primary">metG</name>
    <name type="ordered locus">azo3203</name>
</gene>
<dbReference type="EC" id="6.1.1.10" evidence="1"/>
<dbReference type="EMBL" id="AM406670">
    <property type="protein sequence ID" value="CAL95819.1"/>
    <property type="molecule type" value="Genomic_DNA"/>
</dbReference>
<dbReference type="RefSeq" id="WP_011766927.1">
    <property type="nucleotide sequence ID" value="NC_008702.1"/>
</dbReference>
<dbReference type="SMR" id="A1KAG3"/>
<dbReference type="STRING" id="62928.azo3203"/>
<dbReference type="KEGG" id="azo:azo3203"/>
<dbReference type="eggNOG" id="COG0073">
    <property type="taxonomic scope" value="Bacteria"/>
</dbReference>
<dbReference type="eggNOG" id="COG0143">
    <property type="taxonomic scope" value="Bacteria"/>
</dbReference>
<dbReference type="HOGENOM" id="CLU_009710_7_0_4"/>
<dbReference type="Proteomes" id="UP000002588">
    <property type="component" value="Chromosome"/>
</dbReference>
<dbReference type="GO" id="GO:0005829">
    <property type="term" value="C:cytosol"/>
    <property type="evidence" value="ECO:0007669"/>
    <property type="project" value="TreeGrafter"/>
</dbReference>
<dbReference type="GO" id="GO:0005524">
    <property type="term" value="F:ATP binding"/>
    <property type="evidence" value="ECO:0007669"/>
    <property type="project" value="UniProtKB-UniRule"/>
</dbReference>
<dbReference type="GO" id="GO:0046872">
    <property type="term" value="F:metal ion binding"/>
    <property type="evidence" value="ECO:0007669"/>
    <property type="project" value="UniProtKB-KW"/>
</dbReference>
<dbReference type="GO" id="GO:0004825">
    <property type="term" value="F:methionine-tRNA ligase activity"/>
    <property type="evidence" value="ECO:0007669"/>
    <property type="project" value="UniProtKB-UniRule"/>
</dbReference>
<dbReference type="GO" id="GO:0000049">
    <property type="term" value="F:tRNA binding"/>
    <property type="evidence" value="ECO:0007669"/>
    <property type="project" value="UniProtKB-KW"/>
</dbReference>
<dbReference type="GO" id="GO:0006431">
    <property type="term" value="P:methionyl-tRNA aminoacylation"/>
    <property type="evidence" value="ECO:0007669"/>
    <property type="project" value="UniProtKB-UniRule"/>
</dbReference>
<dbReference type="CDD" id="cd07957">
    <property type="entry name" value="Anticodon_Ia_Met"/>
    <property type="match status" value="1"/>
</dbReference>
<dbReference type="CDD" id="cd00814">
    <property type="entry name" value="MetRS_core"/>
    <property type="match status" value="1"/>
</dbReference>
<dbReference type="CDD" id="cd02800">
    <property type="entry name" value="tRNA_bind_EcMetRS_like"/>
    <property type="match status" value="1"/>
</dbReference>
<dbReference type="FunFam" id="1.10.730.10:FF:000005">
    <property type="entry name" value="Methionine--tRNA ligase"/>
    <property type="match status" value="1"/>
</dbReference>
<dbReference type="FunFam" id="2.20.28.20:FF:000001">
    <property type="entry name" value="Methionine--tRNA ligase"/>
    <property type="match status" value="1"/>
</dbReference>
<dbReference type="FunFam" id="2.40.50.140:FF:000042">
    <property type="entry name" value="Methionine--tRNA ligase"/>
    <property type="match status" value="1"/>
</dbReference>
<dbReference type="Gene3D" id="3.40.50.620">
    <property type="entry name" value="HUPs"/>
    <property type="match status" value="1"/>
</dbReference>
<dbReference type="Gene3D" id="1.10.730.10">
    <property type="entry name" value="Isoleucyl-tRNA Synthetase, Domain 1"/>
    <property type="match status" value="1"/>
</dbReference>
<dbReference type="Gene3D" id="2.20.28.20">
    <property type="entry name" value="Methionyl-tRNA synthetase, Zn-domain"/>
    <property type="match status" value="1"/>
</dbReference>
<dbReference type="Gene3D" id="2.40.50.140">
    <property type="entry name" value="Nucleic acid-binding proteins"/>
    <property type="match status" value="1"/>
</dbReference>
<dbReference type="HAMAP" id="MF_00098">
    <property type="entry name" value="Met_tRNA_synth_type1"/>
    <property type="match status" value="1"/>
</dbReference>
<dbReference type="InterPro" id="IPR001412">
    <property type="entry name" value="aa-tRNA-synth_I_CS"/>
</dbReference>
<dbReference type="InterPro" id="IPR041872">
    <property type="entry name" value="Anticodon_Met"/>
</dbReference>
<dbReference type="InterPro" id="IPR004495">
    <property type="entry name" value="Met-tRNA-synth_bsu_C"/>
</dbReference>
<dbReference type="InterPro" id="IPR023458">
    <property type="entry name" value="Met-tRNA_ligase_1"/>
</dbReference>
<dbReference type="InterPro" id="IPR014758">
    <property type="entry name" value="Met-tRNA_synth"/>
</dbReference>
<dbReference type="InterPro" id="IPR015413">
    <property type="entry name" value="Methionyl/Leucyl_tRNA_Synth"/>
</dbReference>
<dbReference type="InterPro" id="IPR033911">
    <property type="entry name" value="MetRS_core"/>
</dbReference>
<dbReference type="InterPro" id="IPR029038">
    <property type="entry name" value="MetRS_Zn"/>
</dbReference>
<dbReference type="InterPro" id="IPR012340">
    <property type="entry name" value="NA-bd_OB-fold"/>
</dbReference>
<dbReference type="InterPro" id="IPR014729">
    <property type="entry name" value="Rossmann-like_a/b/a_fold"/>
</dbReference>
<dbReference type="InterPro" id="IPR002547">
    <property type="entry name" value="tRNA-bd_dom"/>
</dbReference>
<dbReference type="InterPro" id="IPR009080">
    <property type="entry name" value="tRNAsynth_Ia_anticodon-bd"/>
</dbReference>
<dbReference type="NCBIfam" id="TIGR00398">
    <property type="entry name" value="metG"/>
    <property type="match status" value="1"/>
</dbReference>
<dbReference type="NCBIfam" id="TIGR00399">
    <property type="entry name" value="metG_C_term"/>
    <property type="match status" value="1"/>
</dbReference>
<dbReference type="NCBIfam" id="NF001100">
    <property type="entry name" value="PRK00133.1"/>
    <property type="match status" value="1"/>
</dbReference>
<dbReference type="PANTHER" id="PTHR45765">
    <property type="entry name" value="METHIONINE--TRNA LIGASE"/>
    <property type="match status" value="1"/>
</dbReference>
<dbReference type="PANTHER" id="PTHR45765:SF1">
    <property type="entry name" value="METHIONINE--TRNA LIGASE, CYTOPLASMIC"/>
    <property type="match status" value="1"/>
</dbReference>
<dbReference type="Pfam" id="PF19303">
    <property type="entry name" value="Anticodon_3"/>
    <property type="match status" value="1"/>
</dbReference>
<dbReference type="Pfam" id="PF09334">
    <property type="entry name" value="tRNA-synt_1g"/>
    <property type="match status" value="1"/>
</dbReference>
<dbReference type="Pfam" id="PF01588">
    <property type="entry name" value="tRNA_bind"/>
    <property type="match status" value="1"/>
</dbReference>
<dbReference type="PRINTS" id="PR01041">
    <property type="entry name" value="TRNASYNTHMET"/>
</dbReference>
<dbReference type="SUPFAM" id="SSF47323">
    <property type="entry name" value="Anticodon-binding domain of a subclass of class I aminoacyl-tRNA synthetases"/>
    <property type="match status" value="1"/>
</dbReference>
<dbReference type="SUPFAM" id="SSF57770">
    <property type="entry name" value="Methionyl-tRNA synthetase (MetRS), Zn-domain"/>
    <property type="match status" value="1"/>
</dbReference>
<dbReference type="SUPFAM" id="SSF50249">
    <property type="entry name" value="Nucleic acid-binding proteins"/>
    <property type="match status" value="1"/>
</dbReference>
<dbReference type="SUPFAM" id="SSF52374">
    <property type="entry name" value="Nucleotidylyl transferase"/>
    <property type="match status" value="1"/>
</dbReference>
<dbReference type="PROSITE" id="PS00178">
    <property type="entry name" value="AA_TRNA_LIGASE_I"/>
    <property type="match status" value="1"/>
</dbReference>
<dbReference type="PROSITE" id="PS50886">
    <property type="entry name" value="TRBD"/>
    <property type="match status" value="1"/>
</dbReference>
<organism>
    <name type="scientific">Azoarcus sp. (strain BH72)</name>
    <dbReference type="NCBI Taxonomy" id="418699"/>
    <lineage>
        <taxon>Bacteria</taxon>
        <taxon>Pseudomonadati</taxon>
        <taxon>Pseudomonadota</taxon>
        <taxon>Betaproteobacteria</taxon>
        <taxon>Rhodocyclales</taxon>
        <taxon>Zoogloeaceae</taxon>
        <taxon>Azoarcus</taxon>
    </lineage>
</organism>
<comment type="function">
    <text evidence="1">Is required not only for elongation of protein synthesis but also for the initiation of all mRNA translation through initiator tRNA(fMet) aminoacylation.</text>
</comment>
<comment type="catalytic activity">
    <reaction evidence="1">
        <text>tRNA(Met) + L-methionine + ATP = L-methionyl-tRNA(Met) + AMP + diphosphate</text>
        <dbReference type="Rhea" id="RHEA:13481"/>
        <dbReference type="Rhea" id="RHEA-COMP:9667"/>
        <dbReference type="Rhea" id="RHEA-COMP:9698"/>
        <dbReference type="ChEBI" id="CHEBI:30616"/>
        <dbReference type="ChEBI" id="CHEBI:33019"/>
        <dbReference type="ChEBI" id="CHEBI:57844"/>
        <dbReference type="ChEBI" id="CHEBI:78442"/>
        <dbReference type="ChEBI" id="CHEBI:78530"/>
        <dbReference type="ChEBI" id="CHEBI:456215"/>
        <dbReference type="EC" id="6.1.1.10"/>
    </reaction>
</comment>
<comment type="cofactor">
    <cofactor evidence="1">
        <name>Zn(2+)</name>
        <dbReference type="ChEBI" id="CHEBI:29105"/>
    </cofactor>
    <text evidence="1">Binds 1 zinc ion per subunit.</text>
</comment>
<comment type="subunit">
    <text evidence="1">Homodimer.</text>
</comment>
<comment type="subcellular location">
    <subcellularLocation>
        <location evidence="1">Cytoplasm</location>
    </subcellularLocation>
</comment>
<comment type="similarity">
    <text evidence="1">Belongs to the class-I aminoacyl-tRNA synthetase family. MetG type 1 subfamily.</text>
</comment>
<proteinExistence type="inferred from homology"/>
<keyword id="KW-0030">Aminoacyl-tRNA synthetase</keyword>
<keyword id="KW-0067">ATP-binding</keyword>
<keyword id="KW-0963">Cytoplasm</keyword>
<keyword id="KW-0436">Ligase</keyword>
<keyword id="KW-0479">Metal-binding</keyword>
<keyword id="KW-0547">Nucleotide-binding</keyword>
<keyword id="KW-0648">Protein biosynthesis</keyword>
<keyword id="KW-1185">Reference proteome</keyword>
<keyword id="KW-0694">RNA-binding</keyword>
<keyword id="KW-0820">tRNA-binding</keyword>
<keyword id="KW-0862">Zinc</keyword>
<protein>
    <recommendedName>
        <fullName evidence="1">Methionine--tRNA ligase</fullName>
        <ecNumber evidence="1">6.1.1.10</ecNumber>
    </recommendedName>
    <alternativeName>
        <fullName evidence="1">Methionyl-tRNA synthetase</fullName>
        <shortName evidence="1">MetRS</shortName>
    </alternativeName>
</protein>